<protein>
    <recommendedName>
        <fullName evidence="1">3-isopropylmalate dehydrogenase</fullName>
        <ecNumber evidence="1">1.1.1.85</ecNumber>
    </recommendedName>
    <alternativeName>
        <fullName evidence="1">3-IPM-DH</fullName>
    </alternativeName>
    <alternativeName>
        <fullName evidence="1">Beta-IPM dehydrogenase</fullName>
        <shortName evidence="1">IMDH</shortName>
    </alternativeName>
</protein>
<evidence type="ECO:0000255" key="1">
    <source>
        <dbReference type="HAMAP-Rule" id="MF_01033"/>
    </source>
</evidence>
<evidence type="ECO:0000305" key="2"/>
<name>LEU3_SHISS</name>
<sequence length="363" mass="39535">MSKNYHIAVLPGDGIGPEVMTQALKVLNAVRNRFAMRITTSHYDVGGAAIDNHGQPLPPATVEGCEQADAVLFGSVGGPKWEHLPPDQQPERGALLPLRKRFKLFSNLRPAKLYQGLEAFCPLRADIAANGFDILCVRELTGGIYFGQPKGREGSGQYEKAFDTEVYHRFEIERIARIAFESARKRRHKVTSIDKANVLQSSILWREIVNEIATEYPDVELAHMYIDNATMQLIKDPSQFDVLLCSNLFGDILSDECAMITGSMGMLPSASLNEQGFGLYEPAGGSAPDIAGKNIANPIAQILSLALLLRYSLDADDAACAIERAINRALEEGIRTGDLARGAAAVSTDEMGDIIARYVAEGV</sequence>
<accession>Q3Z5T7</accession>
<comment type="function">
    <text evidence="1">Catalyzes the oxidation of 3-carboxy-2-hydroxy-4-methylpentanoate (3-isopropylmalate) to 3-carboxy-4-methyl-2-oxopentanoate. The product decarboxylates to 4-methyl-2 oxopentanoate.</text>
</comment>
<comment type="catalytic activity">
    <reaction evidence="1">
        <text>(2R,3S)-3-isopropylmalate + NAD(+) = 4-methyl-2-oxopentanoate + CO2 + NADH</text>
        <dbReference type="Rhea" id="RHEA:32271"/>
        <dbReference type="ChEBI" id="CHEBI:16526"/>
        <dbReference type="ChEBI" id="CHEBI:17865"/>
        <dbReference type="ChEBI" id="CHEBI:35121"/>
        <dbReference type="ChEBI" id="CHEBI:57540"/>
        <dbReference type="ChEBI" id="CHEBI:57945"/>
        <dbReference type="EC" id="1.1.1.85"/>
    </reaction>
</comment>
<comment type="cofactor">
    <cofactor evidence="1">
        <name>Mg(2+)</name>
        <dbReference type="ChEBI" id="CHEBI:18420"/>
    </cofactor>
    <cofactor evidence="1">
        <name>Mn(2+)</name>
        <dbReference type="ChEBI" id="CHEBI:29035"/>
    </cofactor>
    <text evidence="1">Binds 1 Mg(2+) or Mn(2+) ion per subunit.</text>
</comment>
<comment type="pathway">
    <text evidence="1">Amino-acid biosynthesis; L-leucine biosynthesis; L-leucine from 3-methyl-2-oxobutanoate: step 3/4.</text>
</comment>
<comment type="subunit">
    <text evidence="1">Homodimer.</text>
</comment>
<comment type="subcellular location">
    <subcellularLocation>
        <location evidence="1">Cytoplasm</location>
    </subcellularLocation>
</comment>
<comment type="similarity">
    <text evidence="1">Belongs to the isocitrate and isopropylmalate dehydrogenases family. LeuB type 1 subfamily.</text>
</comment>
<comment type="sequence caution" evidence="2">
    <conflict type="erroneous initiation">
        <sequence resource="EMBL-CDS" id="AAZ86875"/>
    </conflict>
</comment>
<reference key="1">
    <citation type="journal article" date="2005" name="Nucleic Acids Res.">
        <title>Genome dynamics and diversity of Shigella species, the etiologic agents of bacillary dysentery.</title>
        <authorList>
            <person name="Yang F."/>
            <person name="Yang J."/>
            <person name="Zhang X."/>
            <person name="Chen L."/>
            <person name="Jiang Y."/>
            <person name="Yan Y."/>
            <person name="Tang X."/>
            <person name="Wang J."/>
            <person name="Xiong Z."/>
            <person name="Dong J."/>
            <person name="Xue Y."/>
            <person name="Zhu Y."/>
            <person name="Xu X."/>
            <person name="Sun L."/>
            <person name="Chen S."/>
            <person name="Nie H."/>
            <person name="Peng J."/>
            <person name="Xu J."/>
            <person name="Wang Y."/>
            <person name="Yuan Z."/>
            <person name="Wen Y."/>
            <person name="Yao Z."/>
            <person name="Shen Y."/>
            <person name="Qiang B."/>
            <person name="Hou Y."/>
            <person name="Yu J."/>
            <person name="Jin Q."/>
        </authorList>
    </citation>
    <scope>NUCLEOTIDE SEQUENCE [LARGE SCALE GENOMIC DNA]</scope>
    <source>
        <strain>Ss046</strain>
    </source>
</reference>
<gene>
    <name evidence="1" type="primary">leuB</name>
    <name type="ordered locus">SSON_0080</name>
</gene>
<feature type="chain" id="PRO_0000083748" description="3-isopropylmalate dehydrogenase">
    <location>
        <begin position="1"/>
        <end position="363"/>
    </location>
</feature>
<feature type="binding site" evidence="1">
    <location>
        <begin position="78"/>
        <end position="91"/>
    </location>
    <ligand>
        <name>NAD(+)</name>
        <dbReference type="ChEBI" id="CHEBI:57540"/>
    </ligand>
</feature>
<feature type="binding site" evidence="1">
    <location>
        <position position="99"/>
    </location>
    <ligand>
        <name>substrate</name>
    </ligand>
</feature>
<feature type="binding site" evidence="1">
    <location>
        <position position="109"/>
    </location>
    <ligand>
        <name>substrate</name>
    </ligand>
</feature>
<feature type="binding site" evidence="1">
    <location>
        <position position="138"/>
    </location>
    <ligand>
        <name>substrate</name>
    </ligand>
</feature>
<feature type="binding site" evidence="1">
    <location>
        <position position="227"/>
    </location>
    <ligand>
        <name>Mg(2+)</name>
        <dbReference type="ChEBI" id="CHEBI:18420"/>
    </ligand>
</feature>
<feature type="binding site" evidence="1">
    <location>
        <position position="227"/>
    </location>
    <ligand>
        <name>substrate</name>
    </ligand>
</feature>
<feature type="binding site" evidence="1">
    <location>
        <position position="251"/>
    </location>
    <ligand>
        <name>Mg(2+)</name>
        <dbReference type="ChEBI" id="CHEBI:18420"/>
    </ligand>
</feature>
<feature type="binding site" evidence="1">
    <location>
        <position position="255"/>
    </location>
    <ligand>
        <name>Mg(2+)</name>
        <dbReference type="ChEBI" id="CHEBI:18420"/>
    </ligand>
</feature>
<feature type="binding site" evidence="1">
    <location>
        <begin position="285"/>
        <end position="297"/>
    </location>
    <ligand>
        <name>NAD(+)</name>
        <dbReference type="ChEBI" id="CHEBI:57540"/>
    </ligand>
</feature>
<feature type="site" description="Important for catalysis" evidence="1">
    <location>
        <position position="145"/>
    </location>
</feature>
<feature type="site" description="Important for catalysis" evidence="1">
    <location>
        <position position="195"/>
    </location>
</feature>
<keyword id="KW-0028">Amino-acid biosynthesis</keyword>
<keyword id="KW-0100">Branched-chain amino acid biosynthesis</keyword>
<keyword id="KW-0963">Cytoplasm</keyword>
<keyword id="KW-0432">Leucine biosynthesis</keyword>
<keyword id="KW-0460">Magnesium</keyword>
<keyword id="KW-0464">Manganese</keyword>
<keyword id="KW-0479">Metal-binding</keyword>
<keyword id="KW-0520">NAD</keyword>
<keyword id="KW-0560">Oxidoreductase</keyword>
<keyword id="KW-1185">Reference proteome</keyword>
<organism>
    <name type="scientific">Shigella sonnei (strain Ss046)</name>
    <dbReference type="NCBI Taxonomy" id="300269"/>
    <lineage>
        <taxon>Bacteria</taxon>
        <taxon>Pseudomonadati</taxon>
        <taxon>Pseudomonadota</taxon>
        <taxon>Gammaproteobacteria</taxon>
        <taxon>Enterobacterales</taxon>
        <taxon>Enterobacteriaceae</taxon>
        <taxon>Shigella</taxon>
    </lineage>
</organism>
<proteinExistence type="inferred from homology"/>
<dbReference type="EC" id="1.1.1.85" evidence="1"/>
<dbReference type="EMBL" id="CP000038">
    <property type="protein sequence ID" value="AAZ86875.1"/>
    <property type="status" value="ALT_INIT"/>
    <property type="molecule type" value="Genomic_DNA"/>
</dbReference>
<dbReference type="RefSeq" id="WP_000042385.1">
    <property type="nucleotide sequence ID" value="NC_007384.1"/>
</dbReference>
<dbReference type="SMR" id="Q3Z5T7"/>
<dbReference type="GeneID" id="93777362"/>
<dbReference type="KEGG" id="ssn:SSON_0080"/>
<dbReference type="HOGENOM" id="CLU_031953_0_3_6"/>
<dbReference type="UniPathway" id="UPA00048">
    <property type="reaction ID" value="UER00072"/>
</dbReference>
<dbReference type="Proteomes" id="UP000002529">
    <property type="component" value="Chromosome"/>
</dbReference>
<dbReference type="GO" id="GO:0005829">
    <property type="term" value="C:cytosol"/>
    <property type="evidence" value="ECO:0007669"/>
    <property type="project" value="TreeGrafter"/>
</dbReference>
<dbReference type="GO" id="GO:0003862">
    <property type="term" value="F:3-isopropylmalate dehydrogenase activity"/>
    <property type="evidence" value="ECO:0007669"/>
    <property type="project" value="UniProtKB-UniRule"/>
</dbReference>
<dbReference type="GO" id="GO:0000287">
    <property type="term" value="F:magnesium ion binding"/>
    <property type="evidence" value="ECO:0007669"/>
    <property type="project" value="InterPro"/>
</dbReference>
<dbReference type="GO" id="GO:0051287">
    <property type="term" value="F:NAD binding"/>
    <property type="evidence" value="ECO:0007669"/>
    <property type="project" value="InterPro"/>
</dbReference>
<dbReference type="GO" id="GO:0009098">
    <property type="term" value="P:L-leucine biosynthetic process"/>
    <property type="evidence" value="ECO:0007669"/>
    <property type="project" value="UniProtKB-UniRule"/>
</dbReference>
<dbReference type="FunFam" id="3.40.718.10:FF:000004">
    <property type="entry name" value="3-isopropylmalate dehydrogenase"/>
    <property type="match status" value="1"/>
</dbReference>
<dbReference type="Gene3D" id="3.40.718.10">
    <property type="entry name" value="Isopropylmalate Dehydrogenase"/>
    <property type="match status" value="1"/>
</dbReference>
<dbReference type="HAMAP" id="MF_01033">
    <property type="entry name" value="LeuB_type1"/>
    <property type="match status" value="1"/>
</dbReference>
<dbReference type="InterPro" id="IPR019818">
    <property type="entry name" value="IsoCit/isopropylmalate_DH_CS"/>
</dbReference>
<dbReference type="InterPro" id="IPR024084">
    <property type="entry name" value="IsoPropMal-DH-like_dom"/>
</dbReference>
<dbReference type="InterPro" id="IPR004429">
    <property type="entry name" value="Isopropylmalate_DH"/>
</dbReference>
<dbReference type="NCBIfam" id="TIGR00169">
    <property type="entry name" value="leuB"/>
    <property type="match status" value="1"/>
</dbReference>
<dbReference type="PANTHER" id="PTHR42979">
    <property type="entry name" value="3-ISOPROPYLMALATE DEHYDROGENASE"/>
    <property type="match status" value="1"/>
</dbReference>
<dbReference type="PANTHER" id="PTHR42979:SF1">
    <property type="entry name" value="3-ISOPROPYLMALATE DEHYDROGENASE"/>
    <property type="match status" value="1"/>
</dbReference>
<dbReference type="Pfam" id="PF00180">
    <property type="entry name" value="Iso_dh"/>
    <property type="match status" value="1"/>
</dbReference>
<dbReference type="SMART" id="SM01329">
    <property type="entry name" value="Iso_dh"/>
    <property type="match status" value="1"/>
</dbReference>
<dbReference type="SUPFAM" id="SSF53659">
    <property type="entry name" value="Isocitrate/Isopropylmalate dehydrogenase-like"/>
    <property type="match status" value="1"/>
</dbReference>
<dbReference type="PROSITE" id="PS00470">
    <property type="entry name" value="IDH_IMDH"/>
    <property type="match status" value="1"/>
</dbReference>